<feature type="chain" id="PRO_1000001692" description="UPF0758 protein Sden_0326">
    <location>
        <begin position="1"/>
        <end position="225"/>
    </location>
</feature>
<feature type="domain" description="MPN" evidence="1">
    <location>
        <begin position="102"/>
        <end position="224"/>
    </location>
</feature>
<feature type="short sequence motif" description="JAMM motif" evidence="1">
    <location>
        <begin position="173"/>
        <end position="186"/>
    </location>
</feature>
<feature type="binding site" evidence="1">
    <location>
        <position position="173"/>
    </location>
    <ligand>
        <name>Zn(2+)</name>
        <dbReference type="ChEBI" id="CHEBI:29105"/>
        <note>catalytic</note>
    </ligand>
</feature>
<feature type="binding site" evidence="1">
    <location>
        <position position="175"/>
    </location>
    <ligand>
        <name>Zn(2+)</name>
        <dbReference type="ChEBI" id="CHEBI:29105"/>
        <note>catalytic</note>
    </ligand>
</feature>
<feature type="binding site" evidence="1">
    <location>
        <position position="186"/>
    </location>
    <ligand>
        <name>Zn(2+)</name>
        <dbReference type="ChEBI" id="CHEBI:29105"/>
        <note>catalytic</note>
    </ligand>
</feature>
<gene>
    <name type="ordered locus">Sden_0326</name>
</gene>
<evidence type="ECO:0000255" key="1">
    <source>
        <dbReference type="PROSITE-ProRule" id="PRU01182"/>
    </source>
</evidence>
<evidence type="ECO:0000305" key="2"/>
<keyword id="KW-0378">Hydrolase</keyword>
<keyword id="KW-0479">Metal-binding</keyword>
<keyword id="KW-0482">Metalloprotease</keyword>
<keyword id="KW-0645">Protease</keyword>
<keyword id="KW-1185">Reference proteome</keyword>
<keyword id="KW-0862">Zinc</keyword>
<protein>
    <recommendedName>
        <fullName>UPF0758 protein Sden_0326</fullName>
    </recommendedName>
</protein>
<organism>
    <name type="scientific">Shewanella denitrificans (strain OS217 / ATCC BAA-1090 / DSM 15013)</name>
    <dbReference type="NCBI Taxonomy" id="318161"/>
    <lineage>
        <taxon>Bacteria</taxon>
        <taxon>Pseudomonadati</taxon>
        <taxon>Pseudomonadota</taxon>
        <taxon>Gammaproteobacteria</taxon>
        <taxon>Alteromonadales</taxon>
        <taxon>Shewanellaceae</taxon>
        <taxon>Shewanella</taxon>
    </lineage>
</organism>
<comment type="similarity">
    <text evidence="2">Belongs to the UPF0758 family.</text>
</comment>
<sequence>MAIKDWPQGEGPRDKLLQQGAARLSDAELLAVLIRNGISGQNALTTGRLLLSHFGGLRSLMTATEDKVCQIPGVGPVKYAQLQAAAEISKRISRENLQRGQILTNPDLTRDYLMRQLADRSYEVFALLLLDSQHRVIQFVELFRGTIDSASVYPREVVSLVLEKRAAAVIICHNHPSGIAEPSQADRRITERLKNALATIDVSLLDHMVVGDFEIVSFAERGWLN</sequence>
<dbReference type="EMBL" id="CP000302">
    <property type="protein sequence ID" value="ABE53621.1"/>
    <property type="molecule type" value="Genomic_DNA"/>
</dbReference>
<dbReference type="RefSeq" id="WP_011494788.1">
    <property type="nucleotide sequence ID" value="NC_007954.1"/>
</dbReference>
<dbReference type="SMR" id="Q12SF5"/>
<dbReference type="STRING" id="318161.Sden_0326"/>
<dbReference type="KEGG" id="sdn:Sden_0326"/>
<dbReference type="eggNOG" id="COG2003">
    <property type="taxonomic scope" value="Bacteria"/>
</dbReference>
<dbReference type="HOGENOM" id="CLU_073529_0_1_6"/>
<dbReference type="OrthoDB" id="9804482at2"/>
<dbReference type="Proteomes" id="UP000001982">
    <property type="component" value="Chromosome"/>
</dbReference>
<dbReference type="GO" id="GO:0046872">
    <property type="term" value="F:metal ion binding"/>
    <property type="evidence" value="ECO:0007669"/>
    <property type="project" value="UniProtKB-KW"/>
</dbReference>
<dbReference type="GO" id="GO:0008237">
    <property type="term" value="F:metallopeptidase activity"/>
    <property type="evidence" value="ECO:0007669"/>
    <property type="project" value="UniProtKB-KW"/>
</dbReference>
<dbReference type="GO" id="GO:0006508">
    <property type="term" value="P:proteolysis"/>
    <property type="evidence" value="ECO:0007669"/>
    <property type="project" value="UniProtKB-KW"/>
</dbReference>
<dbReference type="CDD" id="cd08071">
    <property type="entry name" value="MPN_DUF2466"/>
    <property type="match status" value="1"/>
</dbReference>
<dbReference type="FunFam" id="3.40.140.10:FF:000032">
    <property type="entry name" value="DNA repair protein RadC"/>
    <property type="match status" value="1"/>
</dbReference>
<dbReference type="Gene3D" id="1.10.150.20">
    <property type="entry name" value="5' to 3' exonuclease, C-terminal subdomain"/>
    <property type="match status" value="1"/>
</dbReference>
<dbReference type="Gene3D" id="3.40.140.10">
    <property type="entry name" value="Cytidine Deaminase, domain 2"/>
    <property type="match status" value="1"/>
</dbReference>
<dbReference type="InterPro" id="IPR037518">
    <property type="entry name" value="MPN"/>
</dbReference>
<dbReference type="InterPro" id="IPR025657">
    <property type="entry name" value="RadC_JAB"/>
</dbReference>
<dbReference type="InterPro" id="IPR010994">
    <property type="entry name" value="RuvA_2-like"/>
</dbReference>
<dbReference type="InterPro" id="IPR001405">
    <property type="entry name" value="UPF0758"/>
</dbReference>
<dbReference type="InterPro" id="IPR020891">
    <property type="entry name" value="UPF0758_CS"/>
</dbReference>
<dbReference type="InterPro" id="IPR046778">
    <property type="entry name" value="UPF0758_N"/>
</dbReference>
<dbReference type="NCBIfam" id="NF000642">
    <property type="entry name" value="PRK00024.1"/>
    <property type="match status" value="1"/>
</dbReference>
<dbReference type="NCBIfam" id="TIGR00608">
    <property type="entry name" value="radc"/>
    <property type="match status" value="1"/>
</dbReference>
<dbReference type="PANTHER" id="PTHR30471">
    <property type="entry name" value="DNA REPAIR PROTEIN RADC"/>
    <property type="match status" value="1"/>
</dbReference>
<dbReference type="PANTHER" id="PTHR30471:SF3">
    <property type="entry name" value="UPF0758 PROTEIN YEES-RELATED"/>
    <property type="match status" value="1"/>
</dbReference>
<dbReference type="Pfam" id="PF04002">
    <property type="entry name" value="RadC"/>
    <property type="match status" value="1"/>
</dbReference>
<dbReference type="Pfam" id="PF20582">
    <property type="entry name" value="UPF0758_N"/>
    <property type="match status" value="1"/>
</dbReference>
<dbReference type="SUPFAM" id="SSF102712">
    <property type="entry name" value="JAB1/MPN domain"/>
    <property type="match status" value="1"/>
</dbReference>
<dbReference type="SUPFAM" id="SSF47781">
    <property type="entry name" value="RuvA domain 2-like"/>
    <property type="match status" value="1"/>
</dbReference>
<dbReference type="PROSITE" id="PS50249">
    <property type="entry name" value="MPN"/>
    <property type="match status" value="1"/>
</dbReference>
<dbReference type="PROSITE" id="PS01302">
    <property type="entry name" value="UPF0758"/>
    <property type="match status" value="1"/>
</dbReference>
<name>Y326_SHEDO</name>
<accession>Q12SF5</accession>
<reference key="1">
    <citation type="submission" date="2006-03" db="EMBL/GenBank/DDBJ databases">
        <title>Complete sequence of Shewanella denitrificans OS217.</title>
        <authorList>
            <consortium name="US DOE Joint Genome Institute"/>
            <person name="Copeland A."/>
            <person name="Lucas S."/>
            <person name="Lapidus A."/>
            <person name="Barry K."/>
            <person name="Detter J.C."/>
            <person name="Glavina del Rio T."/>
            <person name="Hammon N."/>
            <person name="Israni S."/>
            <person name="Dalin E."/>
            <person name="Tice H."/>
            <person name="Pitluck S."/>
            <person name="Brettin T."/>
            <person name="Bruce D."/>
            <person name="Han C."/>
            <person name="Tapia R."/>
            <person name="Gilna P."/>
            <person name="Kiss H."/>
            <person name="Schmutz J."/>
            <person name="Larimer F."/>
            <person name="Land M."/>
            <person name="Hauser L."/>
            <person name="Kyrpides N."/>
            <person name="Lykidis A."/>
            <person name="Richardson P."/>
        </authorList>
    </citation>
    <scope>NUCLEOTIDE SEQUENCE [LARGE SCALE GENOMIC DNA]</scope>
    <source>
        <strain>OS217 / ATCC BAA-1090 / DSM 15013</strain>
    </source>
</reference>
<proteinExistence type="inferred from homology"/>